<keyword id="KW-0028">Amino-acid biosynthesis</keyword>
<keyword id="KW-0055">Arginine biosynthesis</keyword>
<keyword id="KW-0067">ATP-binding</keyword>
<keyword id="KW-0963">Cytoplasm</keyword>
<keyword id="KW-0418">Kinase</keyword>
<keyword id="KW-0547">Nucleotide-binding</keyword>
<keyword id="KW-0808">Transferase</keyword>
<accession>Q3ASI5</accession>
<gene>
    <name evidence="1" type="primary">argB</name>
    <name type="ordered locus">Cag_0774</name>
</gene>
<evidence type="ECO:0000255" key="1">
    <source>
        <dbReference type="HAMAP-Rule" id="MF_00082"/>
    </source>
</evidence>
<reference key="1">
    <citation type="submission" date="2005-08" db="EMBL/GenBank/DDBJ databases">
        <title>Complete sequence of Chlorobium chlorochromatii CaD3.</title>
        <authorList>
            <consortium name="US DOE Joint Genome Institute"/>
            <person name="Copeland A."/>
            <person name="Lucas S."/>
            <person name="Lapidus A."/>
            <person name="Barry K."/>
            <person name="Detter J.C."/>
            <person name="Glavina T."/>
            <person name="Hammon N."/>
            <person name="Israni S."/>
            <person name="Pitluck S."/>
            <person name="Bryant D."/>
            <person name="Schmutz J."/>
            <person name="Larimer F."/>
            <person name="Land M."/>
            <person name="Kyrpides N."/>
            <person name="Ivanova N."/>
            <person name="Richardson P."/>
        </authorList>
    </citation>
    <scope>NUCLEOTIDE SEQUENCE [LARGE SCALE GENOMIC DNA]</scope>
    <source>
        <strain>CaD3</strain>
    </source>
</reference>
<proteinExistence type="inferred from homology"/>
<organism>
    <name type="scientific">Chlorobium chlorochromatii (strain CaD3)</name>
    <dbReference type="NCBI Taxonomy" id="340177"/>
    <lineage>
        <taxon>Bacteria</taxon>
        <taxon>Pseudomonadati</taxon>
        <taxon>Chlorobiota</taxon>
        <taxon>Chlorobiia</taxon>
        <taxon>Chlorobiales</taxon>
        <taxon>Chlorobiaceae</taxon>
        <taxon>Chlorobium/Pelodictyon group</taxon>
        <taxon>Chlorobium</taxon>
    </lineage>
</organism>
<dbReference type="EC" id="2.7.2.8" evidence="1"/>
<dbReference type="EMBL" id="CP000108">
    <property type="protein sequence ID" value="ABB28040.1"/>
    <property type="molecule type" value="Genomic_DNA"/>
</dbReference>
<dbReference type="SMR" id="Q3ASI5"/>
<dbReference type="STRING" id="340177.Cag_0774"/>
<dbReference type="KEGG" id="cch:Cag_0774"/>
<dbReference type="eggNOG" id="COG0548">
    <property type="taxonomic scope" value="Bacteria"/>
</dbReference>
<dbReference type="HOGENOM" id="CLU_053680_0_0_10"/>
<dbReference type="OrthoDB" id="9803155at2"/>
<dbReference type="UniPathway" id="UPA00068">
    <property type="reaction ID" value="UER00107"/>
</dbReference>
<dbReference type="GO" id="GO:0005737">
    <property type="term" value="C:cytoplasm"/>
    <property type="evidence" value="ECO:0007669"/>
    <property type="project" value="UniProtKB-SubCell"/>
</dbReference>
<dbReference type="GO" id="GO:0003991">
    <property type="term" value="F:acetylglutamate kinase activity"/>
    <property type="evidence" value="ECO:0007669"/>
    <property type="project" value="UniProtKB-UniRule"/>
</dbReference>
<dbReference type="GO" id="GO:0005524">
    <property type="term" value="F:ATP binding"/>
    <property type="evidence" value="ECO:0007669"/>
    <property type="project" value="UniProtKB-UniRule"/>
</dbReference>
<dbReference type="GO" id="GO:0042450">
    <property type="term" value="P:arginine biosynthetic process via ornithine"/>
    <property type="evidence" value="ECO:0007669"/>
    <property type="project" value="UniProtKB-UniRule"/>
</dbReference>
<dbReference type="GO" id="GO:0006526">
    <property type="term" value="P:L-arginine biosynthetic process"/>
    <property type="evidence" value="ECO:0007669"/>
    <property type="project" value="UniProtKB-UniPathway"/>
</dbReference>
<dbReference type="CDD" id="cd04250">
    <property type="entry name" value="AAK_NAGK-C"/>
    <property type="match status" value="1"/>
</dbReference>
<dbReference type="FunFam" id="3.40.1160.10:FF:000004">
    <property type="entry name" value="Acetylglutamate kinase"/>
    <property type="match status" value="1"/>
</dbReference>
<dbReference type="Gene3D" id="3.40.1160.10">
    <property type="entry name" value="Acetylglutamate kinase-like"/>
    <property type="match status" value="1"/>
</dbReference>
<dbReference type="HAMAP" id="MF_00082">
    <property type="entry name" value="ArgB"/>
    <property type="match status" value="1"/>
</dbReference>
<dbReference type="InterPro" id="IPR036393">
    <property type="entry name" value="AceGlu_kinase-like_sf"/>
</dbReference>
<dbReference type="InterPro" id="IPR004662">
    <property type="entry name" value="AcgluKinase_fam"/>
</dbReference>
<dbReference type="InterPro" id="IPR037528">
    <property type="entry name" value="ArgB"/>
</dbReference>
<dbReference type="InterPro" id="IPR001048">
    <property type="entry name" value="Asp/Glu/Uridylate_kinase"/>
</dbReference>
<dbReference type="InterPro" id="IPR041727">
    <property type="entry name" value="NAGK-C"/>
</dbReference>
<dbReference type="NCBIfam" id="TIGR00761">
    <property type="entry name" value="argB"/>
    <property type="match status" value="1"/>
</dbReference>
<dbReference type="PANTHER" id="PTHR23342">
    <property type="entry name" value="N-ACETYLGLUTAMATE SYNTHASE"/>
    <property type="match status" value="1"/>
</dbReference>
<dbReference type="PANTHER" id="PTHR23342:SF0">
    <property type="entry name" value="N-ACETYLGLUTAMATE SYNTHASE, MITOCHONDRIAL"/>
    <property type="match status" value="1"/>
</dbReference>
<dbReference type="Pfam" id="PF00696">
    <property type="entry name" value="AA_kinase"/>
    <property type="match status" value="1"/>
</dbReference>
<dbReference type="PIRSF" id="PIRSF000728">
    <property type="entry name" value="NAGK"/>
    <property type="match status" value="1"/>
</dbReference>
<dbReference type="SUPFAM" id="SSF53633">
    <property type="entry name" value="Carbamate kinase-like"/>
    <property type="match status" value="1"/>
</dbReference>
<feature type="chain" id="PRO_0000264692" description="Acetylglutamate kinase">
    <location>
        <begin position="1"/>
        <end position="286"/>
    </location>
</feature>
<feature type="binding site" evidence="1">
    <location>
        <begin position="69"/>
        <end position="70"/>
    </location>
    <ligand>
        <name>substrate</name>
    </ligand>
</feature>
<feature type="binding site" evidence="1">
    <location>
        <position position="91"/>
    </location>
    <ligand>
        <name>substrate</name>
    </ligand>
</feature>
<feature type="binding site" evidence="1">
    <location>
        <position position="185"/>
    </location>
    <ligand>
        <name>substrate</name>
    </ligand>
</feature>
<feature type="site" description="Transition state stabilizer" evidence="1">
    <location>
        <position position="34"/>
    </location>
</feature>
<feature type="site" description="Transition state stabilizer" evidence="1">
    <location>
        <position position="244"/>
    </location>
</feature>
<name>ARGB_CHLCH</name>
<sequence>MSSERKAPHAAIGQVLIEALPYIRQFEGKTFVIKYGGAAMKDDTLKNMFAQNVTLLRKVGIRIVLVHGGGDAITRTAEKLGLQSRFVQGRRVTDKEMISVIQMTLAGKVNQDIVQLISEHGGKAVGVSGLDADTIKAHPHPNAEQLGLVGEVEQINTDYIDLLSQAGLIPVIAPVGFDCDGNLYNINADDAASSISIALKAEKLIYVSDVAGIQVGDKILKTISKAEAADLIERGIISGGMIPKVVSAFNTMDGGVGKVHLIDGKSTHSLLLEIFTHEGVGTQFIN</sequence>
<comment type="function">
    <text evidence="1">Catalyzes the ATP-dependent phosphorylation of N-acetyl-L-glutamate.</text>
</comment>
<comment type="catalytic activity">
    <reaction evidence="1">
        <text>N-acetyl-L-glutamate + ATP = N-acetyl-L-glutamyl 5-phosphate + ADP</text>
        <dbReference type="Rhea" id="RHEA:14629"/>
        <dbReference type="ChEBI" id="CHEBI:30616"/>
        <dbReference type="ChEBI" id="CHEBI:44337"/>
        <dbReference type="ChEBI" id="CHEBI:57936"/>
        <dbReference type="ChEBI" id="CHEBI:456216"/>
        <dbReference type="EC" id="2.7.2.8"/>
    </reaction>
</comment>
<comment type="pathway">
    <text evidence="1">Amino-acid biosynthesis; L-arginine biosynthesis; N(2)-acetyl-L-ornithine from L-glutamate: step 2/4.</text>
</comment>
<comment type="subcellular location">
    <subcellularLocation>
        <location evidence="1">Cytoplasm</location>
    </subcellularLocation>
</comment>
<comment type="similarity">
    <text evidence="1">Belongs to the acetylglutamate kinase family. ArgB subfamily.</text>
</comment>
<protein>
    <recommendedName>
        <fullName evidence="1">Acetylglutamate kinase</fullName>
        <ecNumber evidence="1">2.7.2.8</ecNumber>
    </recommendedName>
    <alternativeName>
        <fullName evidence="1">N-acetyl-L-glutamate 5-phosphotransferase</fullName>
    </alternativeName>
    <alternativeName>
        <fullName evidence="1">NAG kinase</fullName>
        <shortName evidence="1">NAGK</shortName>
    </alternativeName>
</protein>